<gene>
    <name evidence="1" type="primary">adk</name>
    <name type="ordered locus">PF1045</name>
</gene>
<evidence type="ECO:0000255" key="1">
    <source>
        <dbReference type="HAMAP-Rule" id="MF_00235"/>
    </source>
</evidence>
<dbReference type="EC" id="2.7.4.3" evidence="1"/>
<dbReference type="EMBL" id="AE009950">
    <property type="protein sequence ID" value="AAL81169.1"/>
    <property type="molecule type" value="Genomic_DNA"/>
</dbReference>
<dbReference type="RefSeq" id="WP_011012182.1">
    <property type="nucleotide sequence ID" value="NZ_CP023154.1"/>
</dbReference>
<dbReference type="SMR" id="Q8U207"/>
<dbReference type="STRING" id="186497.PF1045"/>
<dbReference type="PaxDb" id="186497-PF1045"/>
<dbReference type="KEGG" id="pfu:PF1045"/>
<dbReference type="PATRIC" id="fig|186497.12.peg.1106"/>
<dbReference type="eggNOG" id="arCOG01046">
    <property type="taxonomic scope" value="Archaea"/>
</dbReference>
<dbReference type="HOGENOM" id="CLU_032354_1_2_2"/>
<dbReference type="OrthoDB" id="31230at2157"/>
<dbReference type="PhylomeDB" id="Q8U207"/>
<dbReference type="BRENDA" id="2.7.4.3">
    <property type="organism ID" value="5243"/>
</dbReference>
<dbReference type="UniPathway" id="UPA00588">
    <property type="reaction ID" value="UER00649"/>
</dbReference>
<dbReference type="Proteomes" id="UP000001013">
    <property type="component" value="Chromosome"/>
</dbReference>
<dbReference type="GO" id="GO:0005737">
    <property type="term" value="C:cytoplasm"/>
    <property type="evidence" value="ECO:0007669"/>
    <property type="project" value="UniProtKB-SubCell"/>
</dbReference>
<dbReference type="GO" id="GO:0004017">
    <property type="term" value="F:adenylate kinase activity"/>
    <property type="evidence" value="ECO:0007669"/>
    <property type="project" value="UniProtKB-UniRule"/>
</dbReference>
<dbReference type="GO" id="GO:0005524">
    <property type="term" value="F:ATP binding"/>
    <property type="evidence" value="ECO:0007669"/>
    <property type="project" value="UniProtKB-UniRule"/>
</dbReference>
<dbReference type="GO" id="GO:0008270">
    <property type="term" value="F:zinc ion binding"/>
    <property type="evidence" value="ECO:0007669"/>
    <property type="project" value="UniProtKB-UniRule"/>
</dbReference>
<dbReference type="GO" id="GO:0044209">
    <property type="term" value="P:AMP salvage"/>
    <property type="evidence" value="ECO:0007669"/>
    <property type="project" value="UniProtKB-UniRule"/>
</dbReference>
<dbReference type="CDD" id="cd01428">
    <property type="entry name" value="ADK"/>
    <property type="match status" value="1"/>
</dbReference>
<dbReference type="FunFam" id="3.40.50.300:FF:000106">
    <property type="entry name" value="Adenylate kinase mitochondrial"/>
    <property type="match status" value="1"/>
</dbReference>
<dbReference type="Gene3D" id="3.40.50.300">
    <property type="entry name" value="P-loop containing nucleotide triphosphate hydrolases"/>
    <property type="match status" value="1"/>
</dbReference>
<dbReference type="HAMAP" id="MF_00235">
    <property type="entry name" value="Adenylate_kinase_Adk"/>
    <property type="match status" value="1"/>
</dbReference>
<dbReference type="InterPro" id="IPR006259">
    <property type="entry name" value="Adenyl_kin_sub"/>
</dbReference>
<dbReference type="InterPro" id="IPR000850">
    <property type="entry name" value="Adenylat/UMP-CMP_kin"/>
</dbReference>
<dbReference type="InterPro" id="IPR033690">
    <property type="entry name" value="Adenylat_kinase_CS"/>
</dbReference>
<dbReference type="InterPro" id="IPR007862">
    <property type="entry name" value="Adenylate_kinase_lid-dom"/>
</dbReference>
<dbReference type="InterPro" id="IPR027417">
    <property type="entry name" value="P-loop_NTPase"/>
</dbReference>
<dbReference type="NCBIfam" id="TIGR01351">
    <property type="entry name" value="adk"/>
    <property type="match status" value="1"/>
</dbReference>
<dbReference type="NCBIfam" id="NF001387">
    <property type="entry name" value="PRK00279.2-5"/>
    <property type="match status" value="1"/>
</dbReference>
<dbReference type="PANTHER" id="PTHR23359">
    <property type="entry name" value="NUCLEOTIDE KINASE"/>
    <property type="match status" value="1"/>
</dbReference>
<dbReference type="Pfam" id="PF00406">
    <property type="entry name" value="ADK"/>
    <property type="match status" value="1"/>
</dbReference>
<dbReference type="Pfam" id="PF05191">
    <property type="entry name" value="ADK_lid"/>
    <property type="match status" value="1"/>
</dbReference>
<dbReference type="PRINTS" id="PR00094">
    <property type="entry name" value="ADENYLTKNASE"/>
</dbReference>
<dbReference type="SUPFAM" id="SSF52540">
    <property type="entry name" value="P-loop containing nucleoside triphosphate hydrolases"/>
    <property type="match status" value="1"/>
</dbReference>
<dbReference type="PROSITE" id="PS00113">
    <property type="entry name" value="ADENYLATE_KINASE"/>
    <property type="match status" value="1"/>
</dbReference>
<feature type="chain" id="PRO_0000158902" description="Adenylate kinase">
    <location>
        <begin position="1"/>
        <end position="220"/>
    </location>
</feature>
<feature type="region of interest" description="NMP" evidence="1">
    <location>
        <begin position="30"/>
        <end position="59"/>
    </location>
</feature>
<feature type="region of interest" description="LID" evidence="1">
    <location>
        <begin position="124"/>
        <end position="161"/>
    </location>
</feature>
<feature type="binding site" evidence="1">
    <location>
        <begin position="10"/>
        <end position="15"/>
    </location>
    <ligand>
        <name>ATP</name>
        <dbReference type="ChEBI" id="CHEBI:30616"/>
    </ligand>
</feature>
<feature type="binding site" evidence="1">
    <location>
        <position position="31"/>
    </location>
    <ligand>
        <name>AMP</name>
        <dbReference type="ChEBI" id="CHEBI:456215"/>
    </ligand>
</feature>
<feature type="binding site" evidence="1">
    <location>
        <position position="36"/>
    </location>
    <ligand>
        <name>AMP</name>
        <dbReference type="ChEBI" id="CHEBI:456215"/>
    </ligand>
</feature>
<feature type="binding site" evidence="1">
    <location>
        <begin position="57"/>
        <end position="59"/>
    </location>
    <ligand>
        <name>AMP</name>
        <dbReference type="ChEBI" id="CHEBI:456215"/>
    </ligand>
</feature>
<feature type="binding site" evidence="1">
    <location>
        <begin position="83"/>
        <end position="86"/>
    </location>
    <ligand>
        <name>AMP</name>
        <dbReference type="ChEBI" id="CHEBI:456215"/>
    </ligand>
</feature>
<feature type="binding site" evidence="1">
    <location>
        <position position="90"/>
    </location>
    <ligand>
        <name>AMP</name>
        <dbReference type="ChEBI" id="CHEBI:456215"/>
    </ligand>
</feature>
<feature type="binding site" evidence="1">
    <location>
        <position position="125"/>
    </location>
    <ligand>
        <name>ATP</name>
        <dbReference type="ChEBI" id="CHEBI:30616"/>
    </ligand>
</feature>
<feature type="binding site" evidence="1">
    <location>
        <position position="128"/>
    </location>
    <ligand>
        <name>Zn(2+)</name>
        <dbReference type="ChEBI" id="CHEBI:29105"/>
        <note>structural</note>
    </ligand>
</feature>
<feature type="binding site" evidence="1">
    <location>
        <position position="131"/>
    </location>
    <ligand>
        <name>Zn(2+)</name>
        <dbReference type="ChEBI" id="CHEBI:29105"/>
        <note>structural</note>
    </ligand>
</feature>
<feature type="binding site" evidence="1">
    <location>
        <begin position="134"/>
        <end position="135"/>
    </location>
    <ligand>
        <name>ATP</name>
        <dbReference type="ChEBI" id="CHEBI:30616"/>
    </ligand>
</feature>
<feature type="binding site" evidence="1">
    <location>
        <position position="148"/>
    </location>
    <ligand>
        <name>Zn(2+)</name>
        <dbReference type="ChEBI" id="CHEBI:29105"/>
        <note>structural</note>
    </ligand>
</feature>
<feature type="binding site" evidence="1">
    <location>
        <position position="151"/>
    </location>
    <ligand>
        <name>Zn(2+)</name>
        <dbReference type="ChEBI" id="CHEBI:29105"/>
        <note>structural</note>
    </ligand>
</feature>
<feature type="binding site" evidence="1">
    <location>
        <position position="158"/>
    </location>
    <ligand>
        <name>AMP</name>
        <dbReference type="ChEBI" id="CHEBI:456215"/>
    </ligand>
</feature>
<feature type="binding site" evidence="1">
    <location>
        <position position="169"/>
    </location>
    <ligand>
        <name>AMP</name>
        <dbReference type="ChEBI" id="CHEBI:456215"/>
    </ligand>
</feature>
<feature type="binding site" evidence="1">
    <location>
        <position position="197"/>
    </location>
    <ligand>
        <name>ATP</name>
        <dbReference type="ChEBI" id="CHEBI:30616"/>
    </ligand>
</feature>
<sequence length="220" mass="25543">MNILIFGPPGSGKSTQARRIVERYGLTYISSGDLIRKEIAEGTPLGREMQAYLARGDLIPDTIVNTLIISKLRRVRKDFIMDGYPRTPEQVIALENYLYDHGIKIDVAIDIYVSLEESIRRVSGRRICPKCGAVYHVEFNPPKIPGRCDVCGAELVQREDDRPEVVEKRYRIYMKNMEPIIKFYQKQRIYVKINGHGNIDEVWERIRPLLDYIRNREAMI</sequence>
<keyword id="KW-0067">ATP-binding</keyword>
<keyword id="KW-0963">Cytoplasm</keyword>
<keyword id="KW-0418">Kinase</keyword>
<keyword id="KW-0479">Metal-binding</keyword>
<keyword id="KW-0545">Nucleotide biosynthesis</keyword>
<keyword id="KW-0547">Nucleotide-binding</keyword>
<keyword id="KW-1185">Reference proteome</keyword>
<keyword id="KW-0808">Transferase</keyword>
<keyword id="KW-0862">Zinc</keyword>
<protein>
    <recommendedName>
        <fullName evidence="1">Adenylate kinase</fullName>
        <shortName evidence="1">AK</shortName>
        <ecNumber evidence="1">2.7.4.3</ecNumber>
    </recommendedName>
    <alternativeName>
        <fullName evidence="1">ATP-AMP transphosphorylase</fullName>
    </alternativeName>
    <alternativeName>
        <fullName evidence="1">ATP:AMP phosphotransferase</fullName>
    </alternativeName>
    <alternativeName>
        <fullName evidence="1">Adenylate monophosphate kinase</fullName>
    </alternativeName>
</protein>
<accession>Q8U207</accession>
<comment type="function">
    <text evidence="1">Catalyzes the reversible transfer of the terminal phosphate group between ATP and AMP. Plays an important role in cellular energy homeostasis and in adenine nucleotide metabolism.</text>
</comment>
<comment type="catalytic activity">
    <reaction evidence="1">
        <text>AMP + ATP = 2 ADP</text>
        <dbReference type="Rhea" id="RHEA:12973"/>
        <dbReference type="ChEBI" id="CHEBI:30616"/>
        <dbReference type="ChEBI" id="CHEBI:456215"/>
        <dbReference type="ChEBI" id="CHEBI:456216"/>
        <dbReference type="EC" id="2.7.4.3"/>
    </reaction>
</comment>
<comment type="pathway">
    <text evidence="1">Purine metabolism; AMP biosynthesis via salvage pathway; AMP from ADP: step 1/1.</text>
</comment>
<comment type="subunit">
    <text evidence="1">Monomer.</text>
</comment>
<comment type="subcellular location">
    <subcellularLocation>
        <location evidence="1">Cytoplasm</location>
    </subcellularLocation>
</comment>
<comment type="domain">
    <text evidence="1">Consists of three domains, a large central CORE domain and two small peripheral domains, NMPbind and LID, which undergo movements during catalysis. The LID domain closes over the site of phosphoryl transfer upon ATP binding. Assembling and dissambling the active center during each catalytic cycle provides an effective means to prevent ATP hydrolysis. Some bacteria have evolved a zinc-coordinating structure that stabilizes the LID domain.</text>
</comment>
<comment type="similarity">
    <text evidence="1">Belongs to the adenylate kinase family.</text>
</comment>
<organism>
    <name type="scientific">Pyrococcus furiosus (strain ATCC 43587 / DSM 3638 / JCM 8422 / Vc1)</name>
    <dbReference type="NCBI Taxonomy" id="186497"/>
    <lineage>
        <taxon>Archaea</taxon>
        <taxon>Methanobacteriati</taxon>
        <taxon>Methanobacteriota</taxon>
        <taxon>Thermococci</taxon>
        <taxon>Thermococcales</taxon>
        <taxon>Thermococcaceae</taxon>
        <taxon>Pyrococcus</taxon>
    </lineage>
</organism>
<proteinExistence type="inferred from homology"/>
<name>KAD_PYRFU</name>
<reference key="1">
    <citation type="journal article" date="1999" name="Genetics">
        <title>Divergence of the hyperthermophilic archaea Pyrococcus furiosus and P. horikoshii inferred from complete genomic sequences.</title>
        <authorList>
            <person name="Maeder D.L."/>
            <person name="Weiss R.B."/>
            <person name="Dunn D.M."/>
            <person name="Cherry J.L."/>
            <person name="Gonzalez J.M."/>
            <person name="DiRuggiero J."/>
            <person name="Robb F.T."/>
        </authorList>
    </citation>
    <scope>NUCLEOTIDE SEQUENCE [LARGE SCALE GENOMIC DNA]</scope>
    <source>
        <strain>ATCC 43587 / DSM 3638 / JCM 8422 / Vc1</strain>
    </source>
</reference>